<sequence>MAREAMIARTTNETSIQLSLSLDGEGKAELETGVPFLTHMLDLFAKHGQFDLHIEAKGDTHIDDHHTTEDIGICLGQAIKEALGDKKGIKRYGNAFVPMDDALAQVVIDLSNRPHFEFRGEFPAAKVGAFDVELVHEFLWKLALEARMNLHVIVHYGRNTHHMVEAVFKALGRALDEATMIDPRVKGVPSTKGML</sequence>
<protein>
    <recommendedName>
        <fullName evidence="1">Imidazoleglycerol-phosphate dehydratase</fullName>
        <shortName evidence="1">IGPD</shortName>
        <ecNumber evidence="1">4.2.1.19</ecNumber>
    </recommendedName>
</protein>
<feature type="chain" id="PRO_1000010279" description="Imidazoleglycerol-phosphate dehydratase">
    <location>
        <begin position="1"/>
        <end position="195"/>
    </location>
</feature>
<name>HIS7_GEOKA</name>
<proteinExistence type="inferred from homology"/>
<gene>
    <name evidence="1" type="primary">hisB</name>
    <name type="ordered locus">GK3074</name>
</gene>
<comment type="catalytic activity">
    <reaction evidence="1">
        <text>D-erythro-1-(imidazol-4-yl)glycerol 3-phosphate = 3-(imidazol-4-yl)-2-oxopropyl phosphate + H2O</text>
        <dbReference type="Rhea" id="RHEA:11040"/>
        <dbReference type="ChEBI" id="CHEBI:15377"/>
        <dbReference type="ChEBI" id="CHEBI:57766"/>
        <dbReference type="ChEBI" id="CHEBI:58278"/>
        <dbReference type="EC" id="4.2.1.19"/>
    </reaction>
</comment>
<comment type="pathway">
    <text evidence="1">Amino-acid biosynthesis; L-histidine biosynthesis; L-histidine from 5-phospho-alpha-D-ribose 1-diphosphate: step 6/9.</text>
</comment>
<comment type="subcellular location">
    <subcellularLocation>
        <location evidence="1">Cytoplasm</location>
    </subcellularLocation>
</comment>
<comment type="similarity">
    <text evidence="1">Belongs to the imidazoleglycerol-phosphate dehydratase family.</text>
</comment>
<accession>Q5KVC7</accession>
<evidence type="ECO:0000255" key="1">
    <source>
        <dbReference type="HAMAP-Rule" id="MF_00076"/>
    </source>
</evidence>
<reference key="1">
    <citation type="journal article" date="2004" name="Nucleic Acids Res.">
        <title>Thermoadaptation trait revealed by the genome sequence of thermophilic Geobacillus kaustophilus.</title>
        <authorList>
            <person name="Takami H."/>
            <person name="Takaki Y."/>
            <person name="Chee G.-J."/>
            <person name="Nishi S."/>
            <person name="Shimamura S."/>
            <person name="Suzuki H."/>
            <person name="Matsui S."/>
            <person name="Uchiyama I."/>
        </authorList>
    </citation>
    <scope>NUCLEOTIDE SEQUENCE [LARGE SCALE GENOMIC DNA]</scope>
    <source>
        <strain>HTA426</strain>
    </source>
</reference>
<dbReference type="EC" id="4.2.1.19" evidence="1"/>
<dbReference type="EMBL" id="BA000043">
    <property type="protein sequence ID" value="BAD77359.1"/>
    <property type="molecule type" value="Genomic_DNA"/>
</dbReference>
<dbReference type="RefSeq" id="WP_011232544.1">
    <property type="nucleotide sequence ID" value="NC_006510.1"/>
</dbReference>
<dbReference type="SMR" id="Q5KVC7"/>
<dbReference type="STRING" id="235909.GK3074"/>
<dbReference type="GeneID" id="32064947"/>
<dbReference type="KEGG" id="gka:GK3074"/>
<dbReference type="eggNOG" id="COG0131">
    <property type="taxonomic scope" value="Bacteria"/>
</dbReference>
<dbReference type="HOGENOM" id="CLU_044308_2_0_9"/>
<dbReference type="UniPathway" id="UPA00031">
    <property type="reaction ID" value="UER00011"/>
</dbReference>
<dbReference type="Proteomes" id="UP000001172">
    <property type="component" value="Chromosome"/>
</dbReference>
<dbReference type="GO" id="GO:0005737">
    <property type="term" value="C:cytoplasm"/>
    <property type="evidence" value="ECO:0007669"/>
    <property type="project" value="UniProtKB-SubCell"/>
</dbReference>
<dbReference type="GO" id="GO:0004424">
    <property type="term" value="F:imidazoleglycerol-phosphate dehydratase activity"/>
    <property type="evidence" value="ECO:0007669"/>
    <property type="project" value="UniProtKB-UniRule"/>
</dbReference>
<dbReference type="GO" id="GO:0000105">
    <property type="term" value="P:L-histidine biosynthetic process"/>
    <property type="evidence" value="ECO:0007669"/>
    <property type="project" value="UniProtKB-UniRule"/>
</dbReference>
<dbReference type="CDD" id="cd07914">
    <property type="entry name" value="IGPD"/>
    <property type="match status" value="1"/>
</dbReference>
<dbReference type="FunFam" id="3.30.230.40:FF:000001">
    <property type="entry name" value="Imidazoleglycerol-phosphate dehydratase HisB"/>
    <property type="match status" value="1"/>
</dbReference>
<dbReference type="FunFam" id="3.30.230.40:FF:000003">
    <property type="entry name" value="Imidazoleglycerol-phosphate dehydratase HisB"/>
    <property type="match status" value="1"/>
</dbReference>
<dbReference type="Gene3D" id="3.30.230.40">
    <property type="entry name" value="Imidazole glycerol phosphate dehydratase, domain 1"/>
    <property type="match status" value="2"/>
</dbReference>
<dbReference type="HAMAP" id="MF_00076">
    <property type="entry name" value="HisB"/>
    <property type="match status" value="1"/>
</dbReference>
<dbReference type="InterPro" id="IPR038494">
    <property type="entry name" value="IGPD_sf"/>
</dbReference>
<dbReference type="InterPro" id="IPR000807">
    <property type="entry name" value="ImidazoleglycerolP_deHydtase"/>
</dbReference>
<dbReference type="InterPro" id="IPR020565">
    <property type="entry name" value="ImidazoleglycerP_deHydtase_CS"/>
</dbReference>
<dbReference type="InterPro" id="IPR020568">
    <property type="entry name" value="Ribosomal_Su5_D2-typ_SF"/>
</dbReference>
<dbReference type="NCBIfam" id="NF002111">
    <property type="entry name" value="PRK00951.2-1"/>
    <property type="match status" value="1"/>
</dbReference>
<dbReference type="NCBIfam" id="NF002114">
    <property type="entry name" value="PRK00951.2-4"/>
    <property type="match status" value="1"/>
</dbReference>
<dbReference type="NCBIfam" id="NF002115">
    <property type="entry name" value="PRK00951.2-5"/>
    <property type="match status" value="1"/>
</dbReference>
<dbReference type="NCBIfam" id="NF002116">
    <property type="entry name" value="PRK00951.2-6"/>
    <property type="match status" value="1"/>
</dbReference>
<dbReference type="PANTHER" id="PTHR23133:SF2">
    <property type="entry name" value="IMIDAZOLEGLYCEROL-PHOSPHATE DEHYDRATASE"/>
    <property type="match status" value="1"/>
</dbReference>
<dbReference type="PANTHER" id="PTHR23133">
    <property type="entry name" value="IMIDAZOLEGLYCEROL-PHOSPHATE DEHYDRATASE HIS7"/>
    <property type="match status" value="1"/>
</dbReference>
<dbReference type="Pfam" id="PF00475">
    <property type="entry name" value="IGPD"/>
    <property type="match status" value="1"/>
</dbReference>
<dbReference type="SUPFAM" id="SSF54211">
    <property type="entry name" value="Ribosomal protein S5 domain 2-like"/>
    <property type="match status" value="2"/>
</dbReference>
<dbReference type="PROSITE" id="PS00954">
    <property type="entry name" value="IGP_DEHYDRATASE_1"/>
    <property type="match status" value="1"/>
</dbReference>
<dbReference type="PROSITE" id="PS00955">
    <property type="entry name" value="IGP_DEHYDRATASE_2"/>
    <property type="match status" value="1"/>
</dbReference>
<organism>
    <name type="scientific">Geobacillus kaustophilus (strain HTA426)</name>
    <dbReference type="NCBI Taxonomy" id="235909"/>
    <lineage>
        <taxon>Bacteria</taxon>
        <taxon>Bacillati</taxon>
        <taxon>Bacillota</taxon>
        <taxon>Bacilli</taxon>
        <taxon>Bacillales</taxon>
        <taxon>Anoxybacillaceae</taxon>
        <taxon>Geobacillus</taxon>
        <taxon>Geobacillus thermoleovorans group</taxon>
    </lineage>
</organism>
<keyword id="KW-0028">Amino-acid biosynthesis</keyword>
<keyword id="KW-0963">Cytoplasm</keyword>
<keyword id="KW-0368">Histidine biosynthesis</keyword>
<keyword id="KW-0456">Lyase</keyword>
<keyword id="KW-1185">Reference proteome</keyword>